<feature type="chain" id="PRO_0000370913" description="ATP synthase subunit delta">
    <location>
        <begin position="1"/>
        <end position="186"/>
    </location>
</feature>
<comment type="function">
    <text evidence="1">F(1)F(0) ATP synthase produces ATP from ADP in the presence of a proton or sodium gradient. F-type ATPases consist of two structural domains, F(1) containing the extramembraneous catalytic core and F(0) containing the membrane proton channel, linked together by a central stalk and a peripheral stalk. During catalysis, ATP synthesis in the catalytic domain of F(1) is coupled via a rotary mechanism of the central stalk subunits to proton translocation.</text>
</comment>
<comment type="function">
    <text evidence="1">This protein is part of the stalk that links CF(0) to CF(1). It either transmits conformational changes from CF(0) to CF(1) or is implicated in proton conduction.</text>
</comment>
<comment type="subunit">
    <text evidence="1">F-type ATPases have 2 components, F(1) - the catalytic core - and F(0) - the membrane proton channel. F(1) has five subunits: alpha(3), beta(3), gamma(1), delta(1), epsilon(1). F(0) has three main subunits: a(1), b(2) and c(10-14). The alpha and beta chains form an alternating ring which encloses part of the gamma chain. F(1) is attached to F(0) by a central stalk formed by the gamma and epsilon chains, while a peripheral stalk is formed by the delta and b chains.</text>
</comment>
<comment type="subcellular location">
    <subcellularLocation>
        <location evidence="1">Cell inner membrane</location>
        <topology evidence="1">Peripheral membrane protein</topology>
    </subcellularLocation>
</comment>
<comment type="similarity">
    <text evidence="1">Belongs to the ATPase delta chain family.</text>
</comment>
<organism>
    <name type="scientific">Brucella suis biovar 1 (strain 1330)</name>
    <dbReference type="NCBI Taxonomy" id="204722"/>
    <lineage>
        <taxon>Bacteria</taxon>
        <taxon>Pseudomonadati</taxon>
        <taxon>Pseudomonadota</taxon>
        <taxon>Alphaproteobacteria</taxon>
        <taxon>Hyphomicrobiales</taxon>
        <taxon>Brucellaceae</taxon>
        <taxon>Brucella/Ochrobactrum group</taxon>
        <taxon>Brucella</taxon>
    </lineage>
</organism>
<sequence>MAETSSLISGVAQRYAGSLFELALDANSVASVEKDLGRFEALLSGSKDLRRLISSPVFSSEDQLHAIGAIADKAGIKGLVGNFLRVVAQNRRLFALPGIIAAFRQIAAEHRGEISADVVSAHELTSAQQNELKATLKGVAGKDVTINVTVDPSILGGLIVKMGSRQIDTSLRTKLSSLKLALKEVG</sequence>
<protein>
    <recommendedName>
        <fullName evidence="1">ATP synthase subunit delta</fullName>
    </recommendedName>
    <alternativeName>
        <fullName evidence="1">ATP synthase F(1) sector subunit delta</fullName>
    </alternativeName>
    <alternativeName>
        <fullName evidence="1">F-type ATPase subunit delta</fullName>
        <shortName evidence="1">F-ATPase subunit delta</shortName>
    </alternativeName>
</protein>
<reference key="1">
    <citation type="journal article" date="2002" name="Proc. Natl. Acad. Sci. U.S.A.">
        <title>The Brucella suis genome reveals fundamental similarities between animal and plant pathogens and symbionts.</title>
        <authorList>
            <person name="Paulsen I.T."/>
            <person name="Seshadri R."/>
            <person name="Nelson K.E."/>
            <person name="Eisen J.A."/>
            <person name="Heidelberg J.F."/>
            <person name="Read T.D."/>
            <person name="Dodson R.J."/>
            <person name="Umayam L.A."/>
            <person name="Brinkac L.M."/>
            <person name="Beanan M.J."/>
            <person name="Daugherty S.C."/>
            <person name="DeBoy R.T."/>
            <person name="Durkin A.S."/>
            <person name="Kolonay J.F."/>
            <person name="Madupu R."/>
            <person name="Nelson W.C."/>
            <person name="Ayodeji B."/>
            <person name="Kraul M."/>
            <person name="Shetty J."/>
            <person name="Malek J.A."/>
            <person name="Van Aken S.E."/>
            <person name="Riedmuller S."/>
            <person name="Tettelin H."/>
            <person name="Gill S.R."/>
            <person name="White O."/>
            <person name="Salzberg S.L."/>
            <person name="Hoover D.L."/>
            <person name="Lindler L.E."/>
            <person name="Halling S.M."/>
            <person name="Boyle S.M."/>
            <person name="Fraser C.M."/>
        </authorList>
    </citation>
    <scope>NUCLEOTIDE SEQUENCE [LARGE SCALE GENOMIC DNA]</scope>
    <source>
        <strain>1330</strain>
    </source>
</reference>
<reference key="2">
    <citation type="journal article" date="2011" name="J. Bacteriol.">
        <title>Revised genome sequence of Brucella suis 1330.</title>
        <authorList>
            <person name="Tae H."/>
            <person name="Shallom S."/>
            <person name="Settlage R."/>
            <person name="Preston D."/>
            <person name="Adams L.G."/>
            <person name="Garner H.R."/>
        </authorList>
    </citation>
    <scope>NUCLEOTIDE SEQUENCE [LARGE SCALE GENOMIC DNA]</scope>
    <source>
        <strain>1330</strain>
    </source>
</reference>
<dbReference type="EMBL" id="AE014291">
    <property type="protein sequence ID" value="AAN30697.1"/>
    <property type="molecule type" value="Genomic_DNA"/>
</dbReference>
<dbReference type="EMBL" id="CP002997">
    <property type="protein sequence ID" value="AEM19114.1"/>
    <property type="molecule type" value="Genomic_DNA"/>
</dbReference>
<dbReference type="RefSeq" id="WP_006192552.1">
    <property type="nucleotide sequence ID" value="NZ_KN046804.1"/>
</dbReference>
<dbReference type="SMR" id="Q8FYR2"/>
<dbReference type="GeneID" id="45052758"/>
<dbReference type="KEGG" id="bms:BR1802"/>
<dbReference type="KEGG" id="bsi:BS1330_I1796"/>
<dbReference type="PATRIC" id="fig|204722.21.peg.1181"/>
<dbReference type="HOGENOM" id="CLU_085114_0_1_5"/>
<dbReference type="PhylomeDB" id="Q8FYR2"/>
<dbReference type="Proteomes" id="UP000007104">
    <property type="component" value="Chromosome I"/>
</dbReference>
<dbReference type="GO" id="GO:0005886">
    <property type="term" value="C:plasma membrane"/>
    <property type="evidence" value="ECO:0007669"/>
    <property type="project" value="UniProtKB-SubCell"/>
</dbReference>
<dbReference type="GO" id="GO:0045259">
    <property type="term" value="C:proton-transporting ATP synthase complex"/>
    <property type="evidence" value="ECO:0007669"/>
    <property type="project" value="UniProtKB-KW"/>
</dbReference>
<dbReference type="GO" id="GO:0046933">
    <property type="term" value="F:proton-transporting ATP synthase activity, rotational mechanism"/>
    <property type="evidence" value="ECO:0007669"/>
    <property type="project" value="UniProtKB-UniRule"/>
</dbReference>
<dbReference type="Gene3D" id="1.10.520.20">
    <property type="entry name" value="N-terminal domain of the delta subunit of the F1F0-ATP synthase"/>
    <property type="match status" value="1"/>
</dbReference>
<dbReference type="HAMAP" id="MF_01416">
    <property type="entry name" value="ATP_synth_delta_bact"/>
    <property type="match status" value="1"/>
</dbReference>
<dbReference type="InterPro" id="IPR026015">
    <property type="entry name" value="ATP_synth_OSCP/delta_N_sf"/>
</dbReference>
<dbReference type="InterPro" id="IPR020781">
    <property type="entry name" value="ATPase_OSCP/d_CS"/>
</dbReference>
<dbReference type="InterPro" id="IPR000711">
    <property type="entry name" value="ATPase_OSCP/dsu"/>
</dbReference>
<dbReference type="NCBIfam" id="TIGR01145">
    <property type="entry name" value="ATP_synt_delta"/>
    <property type="match status" value="1"/>
</dbReference>
<dbReference type="NCBIfam" id="NF004402">
    <property type="entry name" value="PRK05758.2-2"/>
    <property type="match status" value="1"/>
</dbReference>
<dbReference type="NCBIfam" id="NF004406">
    <property type="entry name" value="PRK05758.3-2"/>
    <property type="match status" value="1"/>
</dbReference>
<dbReference type="PANTHER" id="PTHR11910">
    <property type="entry name" value="ATP SYNTHASE DELTA CHAIN"/>
    <property type="match status" value="1"/>
</dbReference>
<dbReference type="Pfam" id="PF00213">
    <property type="entry name" value="OSCP"/>
    <property type="match status" value="1"/>
</dbReference>
<dbReference type="PRINTS" id="PR00125">
    <property type="entry name" value="ATPASEDELTA"/>
</dbReference>
<dbReference type="SUPFAM" id="SSF47928">
    <property type="entry name" value="N-terminal domain of the delta subunit of the F1F0-ATP synthase"/>
    <property type="match status" value="1"/>
</dbReference>
<dbReference type="PROSITE" id="PS00389">
    <property type="entry name" value="ATPASE_DELTA"/>
    <property type="match status" value="1"/>
</dbReference>
<evidence type="ECO:0000255" key="1">
    <source>
        <dbReference type="HAMAP-Rule" id="MF_01416"/>
    </source>
</evidence>
<gene>
    <name evidence="1" type="primary">atpH</name>
    <name type="ordered locus">BR1802</name>
    <name type="ordered locus">BS1330_I1796</name>
</gene>
<proteinExistence type="inferred from homology"/>
<keyword id="KW-0066">ATP synthesis</keyword>
<keyword id="KW-0997">Cell inner membrane</keyword>
<keyword id="KW-1003">Cell membrane</keyword>
<keyword id="KW-0139">CF(1)</keyword>
<keyword id="KW-0375">Hydrogen ion transport</keyword>
<keyword id="KW-0406">Ion transport</keyword>
<keyword id="KW-0472">Membrane</keyword>
<keyword id="KW-0813">Transport</keyword>
<accession>Q8FYR2</accession>
<accession>G0K7D8</accession>
<name>ATPD_BRUSU</name>